<gene>
    <name type="primary">nubp2</name>
</gene>
<keyword id="KW-0004">4Fe-4S</keyword>
<keyword id="KW-0067">ATP-binding</keyword>
<keyword id="KW-0963">Cytoplasm</keyword>
<keyword id="KW-0408">Iron</keyword>
<keyword id="KW-0411">Iron-sulfur</keyword>
<keyword id="KW-0479">Metal-binding</keyword>
<keyword id="KW-0547">Nucleotide-binding</keyword>
<keyword id="KW-1185">Reference proteome</keyword>
<sequence length="270" mass="28954">MEQTQDGGNLSGVHHIILVLSGKGGVGKSTISTEIALALRHAGKKVGILDVDLCGPSIPRMLNAQSKDVHQCDSGWVPVYVDQEKSISLMSIGFLLEKPDDAVVWRGPKKNALIKQFVSDVAWGDLDFLIIDTPPGTSDEHISTVDALRPFNPMGALLVTTPQAVSVGDVRRELTFCKKTGLRVIGIVENMSGYVCPHCTECTNIFSKGGGEELARLSGVPFLGCVPLDPLLSQSLEQGKDLMQEFPNSAAYPAISSITRQILDMASPQS</sequence>
<evidence type="ECO:0000255" key="1">
    <source>
        <dbReference type="HAMAP-Rule" id="MF_03039"/>
    </source>
</evidence>
<protein>
    <recommendedName>
        <fullName evidence="1">Cytosolic Fe-S cluster assembly factor nubp2</fullName>
    </recommendedName>
    <alternativeName>
        <fullName evidence="1">Nucleotide-binding protein 2</fullName>
        <shortName evidence="1">NBP 2</shortName>
    </alternativeName>
</protein>
<proteinExistence type="evidence at transcript level"/>
<reference key="1">
    <citation type="submission" date="2004-07" db="EMBL/GenBank/DDBJ databases">
        <authorList>
            <consortium name="NIH - Xenopus Gene Collection (XGC) project"/>
        </authorList>
    </citation>
    <scope>NUCLEOTIDE SEQUENCE [LARGE SCALE MRNA]</scope>
    <source>
        <tissue>Embryo</tissue>
    </source>
</reference>
<feature type="chain" id="PRO_0000382703" description="Cytosolic Fe-S cluster assembly factor nubp2">
    <location>
        <begin position="1"/>
        <end position="270"/>
    </location>
</feature>
<feature type="binding site" evidence="1">
    <location>
        <begin position="22"/>
        <end position="29"/>
    </location>
    <ligand>
        <name>ATP</name>
        <dbReference type="ChEBI" id="CHEBI:30616"/>
    </ligand>
</feature>
<feature type="binding site" evidence="1">
    <location>
        <position position="196"/>
    </location>
    <ligand>
        <name>[4Fe-4S] cluster</name>
        <dbReference type="ChEBI" id="CHEBI:49883"/>
        <note>ligand shared between dimeric partners</note>
    </ligand>
</feature>
<feature type="binding site" evidence="1">
    <location>
        <position position="199"/>
    </location>
    <ligand>
        <name>[4Fe-4S] cluster</name>
        <dbReference type="ChEBI" id="CHEBI:49883"/>
        <note>ligand shared between dimeric partners</note>
    </ligand>
</feature>
<comment type="function">
    <text evidence="1">Component of the cytosolic iron-sulfur (Fe/S) protein assembly (CIA) machinery. Required for maturation of extramitochondrial Fe-S proteins. The nubp1-nubp2 heterotetramer forms a Fe-S scaffold complex, mediating the de novo assembly of an Fe-S cluster and its transfer to target apoproteins.</text>
</comment>
<comment type="cofactor">
    <cofactor evidence="1">
        <name>[4Fe-4S] cluster</name>
        <dbReference type="ChEBI" id="CHEBI:49883"/>
    </cofactor>
    <text evidence="1">Binds 4 [4Fe-4S] clusters per heterotetramer. Contains two stable clusters in the N-termini of nubp1 and two labile, bridging clusters between subunits of the nubp1-nubp2 heterotetramer.</text>
</comment>
<comment type="subunit">
    <text evidence="1">Heterotetramer of 2 nubp1 and 2 nubp2 chains.</text>
</comment>
<comment type="subcellular location">
    <subcellularLocation>
        <location evidence="1">Cytoplasm</location>
    </subcellularLocation>
</comment>
<comment type="similarity">
    <text evidence="1">Belongs to the Mrp/NBP35 ATP-binding proteins family. NUBP2/CFD1 subfamily.</text>
</comment>
<name>NUBP2_XENLA</name>
<dbReference type="EMBL" id="BC077178">
    <property type="protein sequence ID" value="AAH77178.1"/>
    <property type="molecule type" value="mRNA"/>
</dbReference>
<dbReference type="RefSeq" id="NP_001086612.1">
    <property type="nucleotide sequence ID" value="NM_001093143.1"/>
</dbReference>
<dbReference type="SMR" id="Q6DEE4"/>
<dbReference type="DNASU" id="446447"/>
<dbReference type="GeneID" id="446447"/>
<dbReference type="KEGG" id="xla:446447"/>
<dbReference type="AGR" id="Xenbase:XB-GENE-999233"/>
<dbReference type="CTD" id="446447"/>
<dbReference type="Xenbase" id="XB-GENE-999233">
    <property type="gene designation" value="nubp2.L"/>
</dbReference>
<dbReference type="OrthoDB" id="1741334at2759"/>
<dbReference type="Proteomes" id="UP000186698">
    <property type="component" value="Chromosome 9_10L"/>
</dbReference>
<dbReference type="Bgee" id="446447">
    <property type="expression patterns" value="Expressed in pancreas and 20 other cell types or tissues"/>
</dbReference>
<dbReference type="GO" id="GO:0005829">
    <property type="term" value="C:cytosol"/>
    <property type="evidence" value="ECO:0000318"/>
    <property type="project" value="GO_Central"/>
</dbReference>
<dbReference type="GO" id="GO:0051539">
    <property type="term" value="F:4 iron, 4 sulfur cluster binding"/>
    <property type="evidence" value="ECO:0007669"/>
    <property type="project" value="UniProtKB-UniRule"/>
</dbReference>
<dbReference type="GO" id="GO:0005524">
    <property type="term" value="F:ATP binding"/>
    <property type="evidence" value="ECO:0007669"/>
    <property type="project" value="UniProtKB-KW"/>
</dbReference>
<dbReference type="GO" id="GO:0140663">
    <property type="term" value="F:ATP-dependent FeS chaperone activity"/>
    <property type="evidence" value="ECO:0007669"/>
    <property type="project" value="InterPro"/>
</dbReference>
<dbReference type="GO" id="GO:0051536">
    <property type="term" value="F:iron-sulfur cluster binding"/>
    <property type="evidence" value="ECO:0000318"/>
    <property type="project" value="GO_Central"/>
</dbReference>
<dbReference type="GO" id="GO:0046872">
    <property type="term" value="F:metal ion binding"/>
    <property type="evidence" value="ECO:0007669"/>
    <property type="project" value="UniProtKB-KW"/>
</dbReference>
<dbReference type="GO" id="GO:0016226">
    <property type="term" value="P:iron-sulfur cluster assembly"/>
    <property type="evidence" value="ECO:0000318"/>
    <property type="project" value="GO_Central"/>
</dbReference>
<dbReference type="CDD" id="cd02037">
    <property type="entry name" value="Mrp_NBP35"/>
    <property type="match status" value="1"/>
</dbReference>
<dbReference type="FunFam" id="3.40.50.300:FF:000796">
    <property type="entry name" value="Cytosolic Fe-S cluster assembly factor NUBP2"/>
    <property type="match status" value="1"/>
</dbReference>
<dbReference type="Gene3D" id="3.40.50.300">
    <property type="entry name" value="P-loop containing nucleotide triphosphate hydrolases"/>
    <property type="match status" value="1"/>
</dbReference>
<dbReference type="HAMAP" id="MF_02040">
    <property type="entry name" value="Mrp_NBP35"/>
    <property type="match status" value="1"/>
</dbReference>
<dbReference type="HAMAP" id="MF_03039">
    <property type="entry name" value="NUBP2"/>
    <property type="match status" value="1"/>
</dbReference>
<dbReference type="InterPro" id="IPR000808">
    <property type="entry name" value="Mrp-like_CS"/>
</dbReference>
<dbReference type="InterPro" id="IPR019591">
    <property type="entry name" value="Mrp/NBP35_ATP-bd"/>
</dbReference>
<dbReference type="InterPro" id="IPR028600">
    <property type="entry name" value="NUBP2/Cfd1_eukaryotes"/>
</dbReference>
<dbReference type="InterPro" id="IPR027417">
    <property type="entry name" value="P-loop_NTPase"/>
</dbReference>
<dbReference type="InterPro" id="IPR033756">
    <property type="entry name" value="YlxH/NBP35"/>
</dbReference>
<dbReference type="PANTHER" id="PTHR23264:SF19">
    <property type="entry name" value="CYTOSOLIC FE-S CLUSTER ASSEMBLY FACTOR NUBP2"/>
    <property type="match status" value="1"/>
</dbReference>
<dbReference type="PANTHER" id="PTHR23264">
    <property type="entry name" value="NUCLEOTIDE-BINDING PROTEIN NBP35 YEAST -RELATED"/>
    <property type="match status" value="1"/>
</dbReference>
<dbReference type="Pfam" id="PF10609">
    <property type="entry name" value="ParA"/>
    <property type="match status" value="1"/>
</dbReference>
<dbReference type="SUPFAM" id="SSF52540">
    <property type="entry name" value="P-loop containing nucleoside triphosphate hydrolases"/>
    <property type="match status" value="1"/>
</dbReference>
<dbReference type="PROSITE" id="PS01215">
    <property type="entry name" value="MRP"/>
    <property type="match status" value="1"/>
</dbReference>
<organism>
    <name type="scientific">Xenopus laevis</name>
    <name type="common">African clawed frog</name>
    <dbReference type="NCBI Taxonomy" id="8355"/>
    <lineage>
        <taxon>Eukaryota</taxon>
        <taxon>Metazoa</taxon>
        <taxon>Chordata</taxon>
        <taxon>Craniata</taxon>
        <taxon>Vertebrata</taxon>
        <taxon>Euteleostomi</taxon>
        <taxon>Amphibia</taxon>
        <taxon>Batrachia</taxon>
        <taxon>Anura</taxon>
        <taxon>Pipoidea</taxon>
        <taxon>Pipidae</taxon>
        <taxon>Xenopodinae</taxon>
        <taxon>Xenopus</taxon>
        <taxon>Xenopus</taxon>
    </lineage>
</organism>
<accession>Q6DEE4</accession>